<protein>
    <recommendedName>
        <fullName evidence="15">Mitochondrial import receptor subunit TOM70</fullName>
    </recommendedName>
    <alternativeName>
        <fullName>Mitochondrial precursor proteins import receptor</fullName>
    </alternativeName>
    <alternativeName>
        <fullName>Translocase of outer membrane 70 kDa subunit</fullName>
    </alternativeName>
    <alternativeName>
        <fullName evidence="16">Translocase of outer mitochondrial membrane protein 70</fullName>
    </alternativeName>
</protein>
<sequence length="608" mass="67455">MAASKPVEAAVVAAAVPSSGSGVGGGGTAGPGTGGLPRWQLALAVGAPLLLGAGAIYLWSRQQRRREARGRGDASGLKRNSERKTPEGRASPAPGSGHPEGPGAHLDMNSLDRAQAAKNKGNKYFKAGKYEQAIQCYTEAISLCPTEKNVDLSTFYQNRAAAFEQLQKWKEVAQDCTKAVELNPKYVKALFRRAKAHEKLDNKKECLEDVTAVCILEGFQNQQSMLLADKVLKLLGKEKAKEKYKNREPLMPSPQFIKSYFSSFTDDIISQPMLKGEKSDEDKDKEGEALEVKENSGYLKAKQYMEEENYDKIISECSKEIDAEGKYMAEALLLRATFYLLIGNANAAKPDLDKVISLKEANVKLRANALIKRGSMYMQQQQPLLSTQDFNMAADIDPQNADVYHHRGQLKILLDQVEEAVADFDECIRLRPESALAQAQKCFALYRQAYTGNNSSQIQAAMKGFEEVIKKFPRCAEGYALYAQALTDQQQFGKADEMYDKCIDLEPDNATTYVHKGLLQLQWKQDLDRGLELISKAIEIDNKCDFAYETMGTIEVQRGNMEKAIDMFNKAINLAKSEMEMAHLYSLCDAAHAQTEVAKKYGLKPPTL</sequence>
<feature type="initiator methionine" description="Removed" evidence="20 24 25 29">
    <location>
        <position position="1"/>
    </location>
</feature>
<feature type="chain" id="PRO_0000106336" description="Mitochondrial import receptor subunit TOM70">
    <location>
        <begin position="2"/>
        <end position="608"/>
    </location>
</feature>
<feature type="topological domain" description="Mitochondrial intermembrane" evidence="2">
    <location>
        <begin position="2"/>
        <end position="38"/>
    </location>
</feature>
<feature type="transmembrane region" description="Helical" evidence="2">
    <location>
        <begin position="39"/>
        <end position="59"/>
    </location>
</feature>
<feature type="topological domain" description="Cytoplasmic" evidence="2">
    <location>
        <begin position="60"/>
        <end position="608"/>
    </location>
</feature>
<feature type="repeat" description="TPR 1">
    <location>
        <begin position="114"/>
        <end position="147"/>
    </location>
</feature>
<feature type="repeat" description="TPR 2">
    <location>
        <begin position="153"/>
        <end position="186"/>
    </location>
</feature>
<feature type="repeat" description="TPR 3">
    <location>
        <begin position="294"/>
        <end position="327"/>
    </location>
</feature>
<feature type="repeat" description="TPR 4">
    <location>
        <begin position="329"/>
        <end position="362"/>
    </location>
</feature>
<feature type="repeat" description="TPR 5">
    <location>
        <begin position="367"/>
        <end position="400"/>
    </location>
</feature>
<feature type="repeat" description="TPR 6">
    <location>
        <begin position="401"/>
        <end position="434"/>
    </location>
</feature>
<feature type="repeat" description="TPR 7">
    <location>
        <begin position="440"/>
        <end position="475"/>
    </location>
</feature>
<feature type="repeat" description="TPR 8">
    <location>
        <begin position="476"/>
        <end position="509"/>
    </location>
</feature>
<feature type="repeat" description="TPR 9">
    <location>
        <begin position="511"/>
        <end position="544"/>
    </location>
</feature>
<feature type="repeat" description="TPR 10">
    <location>
        <begin position="545"/>
        <end position="578"/>
    </location>
</feature>
<feature type="region of interest" description="Disordered" evidence="3">
    <location>
        <begin position="67"/>
        <end position="107"/>
    </location>
</feature>
<feature type="modified residue" description="N-acetylalanine" evidence="20 24 25 29">
    <location>
        <position position="2"/>
    </location>
</feature>
<feature type="modified residue" description="Omega-N-methylarginine" evidence="27">
    <location>
        <position position="71"/>
    </location>
</feature>
<feature type="modified residue" description="Phosphoserine" evidence="18 19 22 23 26 28">
    <location>
        <position position="91"/>
    </location>
</feature>
<feature type="modified residue" description="Phosphoserine" evidence="28">
    <location>
        <position position="96"/>
    </location>
</feature>
<feature type="modified residue" description="Phosphoserine" evidence="26">
    <location>
        <position position="110"/>
    </location>
</feature>
<feature type="modified residue" description="N6-acetyllysine" evidence="21">
    <location>
        <position position="185"/>
    </location>
</feature>
<feature type="modified residue" description="Phosphoserine" evidence="26">
    <location>
        <position position="434"/>
    </location>
</feature>
<feature type="cross-link" description="Glycyl lysine isopeptide (Lys-Gly) (interchain with G-Cter in SUMO2)" evidence="30">
    <location>
        <position position="275"/>
    </location>
</feature>
<feature type="mutagenesis site" description="Unable to induce IRF3 activation upon Sendai virus infection. Loss of interaction with HSPA8 and HSP90AA1. No effect on mitochondrial location." evidence="4 6 7">
    <original>R</original>
    <variation>A</variation>
    <location>
        <position position="192"/>
    </location>
</feature>
<feature type="mutagenesis site" description="No effect on interaction with HSP90AA1." evidence="7">
    <original>K</original>
    <variation>A</variation>
    <location>
        <position position="195"/>
    </location>
</feature>
<feature type="helix" evidence="31">
    <location>
        <begin position="110"/>
        <end position="126"/>
    </location>
</feature>
<feature type="helix" evidence="31">
    <location>
        <begin position="130"/>
        <end position="143"/>
    </location>
</feature>
<feature type="helix" evidence="32">
    <location>
        <begin position="146"/>
        <end position="148"/>
    </location>
</feature>
<feature type="helix" evidence="31">
    <location>
        <begin position="149"/>
        <end position="165"/>
    </location>
</feature>
<feature type="helix" evidence="31">
    <location>
        <begin position="169"/>
        <end position="182"/>
    </location>
</feature>
<feature type="helix" evidence="31">
    <location>
        <begin position="187"/>
        <end position="199"/>
    </location>
</feature>
<feature type="helix" evidence="31">
    <location>
        <begin position="203"/>
        <end position="216"/>
    </location>
</feature>
<feature type="turn" evidence="31">
    <location>
        <begin position="217"/>
        <end position="219"/>
    </location>
</feature>
<feature type="helix" evidence="31">
    <location>
        <begin position="222"/>
        <end position="245"/>
    </location>
</feature>
<feature type="helix" evidence="31">
    <location>
        <begin position="254"/>
        <end position="262"/>
    </location>
</feature>
<feature type="turn" evidence="32">
    <location>
        <begin position="268"/>
        <end position="270"/>
    </location>
</feature>
<feature type="helix" evidence="31">
    <location>
        <begin position="298"/>
        <end position="306"/>
    </location>
</feature>
<feature type="helix" evidence="31">
    <location>
        <begin position="310"/>
        <end position="312"/>
    </location>
</feature>
<feature type="helix" evidence="31">
    <location>
        <begin position="313"/>
        <end position="323"/>
    </location>
</feature>
<feature type="helix" evidence="31">
    <location>
        <begin position="328"/>
        <end position="341"/>
    </location>
</feature>
<feature type="helix" evidence="31">
    <location>
        <begin position="345"/>
        <end position="357"/>
    </location>
</feature>
<feature type="strand" evidence="31">
    <location>
        <begin position="359"/>
        <end position="361"/>
    </location>
</feature>
<feature type="helix" evidence="31">
    <location>
        <begin position="363"/>
        <end position="379"/>
    </location>
</feature>
<feature type="helix" evidence="31">
    <location>
        <begin position="383"/>
        <end position="396"/>
    </location>
</feature>
<feature type="helix" evidence="31">
    <location>
        <begin position="401"/>
        <end position="413"/>
    </location>
</feature>
<feature type="helix" evidence="31">
    <location>
        <begin position="417"/>
        <end position="430"/>
    </location>
</feature>
<feature type="helix" evidence="31">
    <location>
        <begin position="435"/>
        <end position="452"/>
    </location>
</feature>
<feature type="helix" evidence="31">
    <location>
        <begin position="455"/>
        <end position="471"/>
    </location>
</feature>
<feature type="helix" evidence="31">
    <location>
        <begin position="476"/>
        <end position="488"/>
    </location>
</feature>
<feature type="helix" evidence="31">
    <location>
        <begin position="492"/>
        <end position="505"/>
    </location>
</feature>
<feature type="helix" evidence="31">
    <location>
        <begin position="510"/>
        <end position="522"/>
    </location>
</feature>
<feature type="helix" evidence="31">
    <location>
        <begin position="527"/>
        <end position="540"/>
    </location>
</feature>
<feature type="helix" evidence="31">
    <location>
        <begin position="545"/>
        <end position="558"/>
    </location>
</feature>
<feature type="helix" evidence="31">
    <location>
        <begin position="561"/>
        <end position="572"/>
    </location>
</feature>
<feature type="helix" evidence="31">
    <location>
        <begin position="578"/>
        <end position="598"/>
    </location>
</feature>
<accession>O94826</accession>
<accession>D3DN48</accession>
<organism>
    <name type="scientific">Homo sapiens</name>
    <name type="common">Human</name>
    <dbReference type="NCBI Taxonomy" id="9606"/>
    <lineage>
        <taxon>Eukaryota</taxon>
        <taxon>Metazoa</taxon>
        <taxon>Chordata</taxon>
        <taxon>Craniata</taxon>
        <taxon>Vertebrata</taxon>
        <taxon>Euteleostomi</taxon>
        <taxon>Mammalia</taxon>
        <taxon>Eutheria</taxon>
        <taxon>Euarchontoglires</taxon>
        <taxon>Primates</taxon>
        <taxon>Haplorrhini</taxon>
        <taxon>Catarrhini</taxon>
        <taxon>Hominidae</taxon>
        <taxon>Homo</taxon>
    </lineage>
</organism>
<evidence type="ECO:0000250" key="1">
    <source>
        <dbReference type="UniProtKB" id="Q9CZW5"/>
    </source>
</evidence>
<evidence type="ECO:0000255" key="2"/>
<evidence type="ECO:0000256" key="3">
    <source>
        <dbReference type="SAM" id="MobiDB-lite"/>
    </source>
</evidence>
<evidence type="ECO:0000269" key="4">
    <source>
    </source>
</evidence>
<evidence type="ECO:0000269" key="5">
    <source>
    </source>
</evidence>
<evidence type="ECO:0000269" key="6">
    <source>
    </source>
</evidence>
<evidence type="ECO:0000269" key="7">
    <source>
    </source>
</evidence>
<evidence type="ECO:0000269" key="8">
    <source>
    </source>
</evidence>
<evidence type="ECO:0000269" key="9">
    <source>
    </source>
</evidence>
<evidence type="ECO:0000269" key="10">
    <source>
    </source>
</evidence>
<evidence type="ECO:0000269" key="11">
    <source>
    </source>
</evidence>
<evidence type="ECO:0000269" key="12">
    <source>
    </source>
</evidence>
<evidence type="ECO:0000269" key="13">
    <source>
    </source>
</evidence>
<evidence type="ECO:0000269" key="14">
    <source>
    </source>
</evidence>
<evidence type="ECO:0000305" key="15"/>
<evidence type="ECO:0000312" key="16">
    <source>
        <dbReference type="HGNC" id="HGNC:11985"/>
    </source>
</evidence>
<evidence type="ECO:0007744" key="17">
    <source>
        <dbReference type="PDB" id="7KDT"/>
    </source>
</evidence>
<evidence type="ECO:0007744" key="18">
    <source>
    </source>
</evidence>
<evidence type="ECO:0007744" key="19">
    <source>
    </source>
</evidence>
<evidence type="ECO:0007744" key="20">
    <source>
    </source>
</evidence>
<evidence type="ECO:0007744" key="21">
    <source>
    </source>
</evidence>
<evidence type="ECO:0007744" key="22">
    <source>
    </source>
</evidence>
<evidence type="ECO:0007744" key="23">
    <source>
    </source>
</evidence>
<evidence type="ECO:0007744" key="24">
    <source>
    </source>
</evidence>
<evidence type="ECO:0007744" key="25">
    <source>
    </source>
</evidence>
<evidence type="ECO:0007744" key="26">
    <source>
    </source>
</evidence>
<evidence type="ECO:0007744" key="27">
    <source>
    </source>
</evidence>
<evidence type="ECO:0007744" key="28">
    <source>
    </source>
</evidence>
<evidence type="ECO:0007744" key="29">
    <source>
    </source>
</evidence>
<evidence type="ECO:0007744" key="30">
    <source>
    </source>
</evidence>
<evidence type="ECO:0007829" key="31">
    <source>
        <dbReference type="PDB" id="7DHG"/>
    </source>
</evidence>
<evidence type="ECO:0007829" key="32">
    <source>
        <dbReference type="PDB" id="7KDT"/>
    </source>
</evidence>
<dbReference type="EMBL" id="AB018262">
    <property type="protein sequence ID" value="BAA34439.2"/>
    <property type="status" value="ALT_INIT"/>
    <property type="molecule type" value="mRNA"/>
</dbReference>
<dbReference type="EMBL" id="CH471052">
    <property type="protein sequence ID" value="EAW79822.1"/>
    <property type="molecule type" value="Genomic_DNA"/>
</dbReference>
<dbReference type="EMBL" id="CH471052">
    <property type="protein sequence ID" value="EAW79823.1"/>
    <property type="molecule type" value="Genomic_DNA"/>
</dbReference>
<dbReference type="EMBL" id="BC003633">
    <property type="protein sequence ID" value="AAH03633.1"/>
    <property type="molecule type" value="mRNA"/>
</dbReference>
<dbReference type="EMBL" id="BC052994">
    <property type="protein sequence ID" value="AAH52994.1"/>
    <property type="molecule type" value="mRNA"/>
</dbReference>
<dbReference type="CCDS" id="CCDS33807.1"/>
<dbReference type="RefSeq" id="NP_055635.3">
    <property type="nucleotide sequence ID" value="NM_014820.4"/>
</dbReference>
<dbReference type="PDB" id="7DHG">
    <property type="method" value="X-ray"/>
    <property type="resolution" value="2.20 A"/>
    <property type="chains" value="C=1-608"/>
</dbReference>
<dbReference type="PDB" id="7KDT">
    <property type="method" value="EM"/>
    <property type="resolution" value="3.05 A"/>
    <property type="chains" value="A=109-608"/>
</dbReference>
<dbReference type="PDBsum" id="7DHG"/>
<dbReference type="PDBsum" id="7KDT"/>
<dbReference type="EMDB" id="EMD-22829"/>
<dbReference type="SMR" id="O94826"/>
<dbReference type="BioGRID" id="115201">
    <property type="interactions" value="154"/>
</dbReference>
<dbReference type="ComplexPortal" id="CPX-6121">
    <property type="entry name" value="TOM40 mitochondrial outer membrane translocase complex"/>
</dbReference>
<dbReference type="CORUM" id="O94826"/>
<dbReference type="FunCoup" id="O94826">
    <property type="interactions" value="1976"/>
</dbReference>
<dbReference type="IntAct" id="O94826">
    <property type="interactions" value="64"/>
</dbReference>
<dbReference type="MINT" id="O94826"/>
<dbReference type="STRING" id="9606.ENSP00000284320"/>
<dbReference type="GlyGen" id="O94826">
    <property type="glycosylation" value="1 site, 1 O-linked glycan (1 site)"/>
</dbReference>
<dbReference type="iPTMnet" id="O94826"/>
<dbReference type="MetOSite" id="O94826"/>
<dbReference type="PhosphoSitePlus" id="O94826"/>
<dbReference type="SwissPalm" id="O94826"/>
<dbReference type="BioMuta" id="TOMM70"/>
<dbReference type="jPOST" id="O94826"/>
<dbReference type="MassIVE" id="O94826"/>
<dbReference type="PaxDb" id="9606-ENSP00000284320"/>
<dbReference type="PeptideAtlas" id="O94826"/>
<dbReference type="ProteomicsDB" id="50468"/>
<dbReference type="Pumba" id="O94826"/>
<dbReference type="ABCD" id="O94826">
    <property type="antibodies" value="1 sequenced antibody"/>
</dbReference>
<dbReference type="Antibodypedia" id="3025">
    <property type="antibodies" value="233 antibodies from 30 providers"/>
</dbReference>
<dbReference type="DNASU" id="9868"/>
<dbReference type="Ensembl" id="ENST00000284320.6">
    <property type="protein sequence ID" value="ENSP00000284320.5"/>
    <property type="gene ID" value="ENSG00000154174.8"/>
</dbReference>
<dbReference type="GeneID" id="9868"/>
<dbReference type="KEGG" id="hsa:9868"/>
<dbReference type="MANE-Select" id="ENST00000284320.6">
    <property type="protein sequence ID" value="ENSP00000284320.5"/>
    <property type="RefSeq nucleotide sequence ID" value="NM_014820.5"/>
    <property type="RefSeq protein sequence ID" value="NP_055635.3"/>
</dbReference>
<dbReference type="UCSC" id="uc003dtw.4">
    <property type="organism name" value="human"/>
</dbReference>
<dbReference type="AGR" id="HGNC:11985"/>
<dbReference type="CTD" id="9868"/>
<dbReference type="DisGeNET" id="9868"/>
<dbReference type="GeneCards" id="TOMM70"/>
<dbReference type="HGNC" id="HGNC:11985">
    <property type="gene designation" value="TOMM70"/>
</dbReference>
<dbReference type="HPA" id="ENSG00000154174">
    <property type="expression patterns" value="Low tissue specificity"/>
</dbReference>
<dbReference type="MIM" id="606081">
    <property type="type" value="gene"/>
</dbReference>
<dbReference type="neXtProt" id="NX_O94826"/>
<dbReference type="OpenTargets" id="ENSG00000154174"/>
<dbReference type="PharmGKB" id="PA36669"/>
<dbReference type="VEuPathDB" id="HostDB:ENSG00000154174"/>
<dbReference type="eggNOG" id="KOG0547">
    <property type="taxonomic scope" value="Eukaryota"/>
</dbReference>
<dbReference type="GeneTree" id="ENSGT00940000157095"/>
<dbReference type="HOGENOM" id="CLU_017516_2_0_1"/>
<dbReference type="InParanoid" id="O94826"/>
<dbReference type="OMA" id="QWRGDIE"/>
<dbReference type="OrthoDB" id="66418at2759"/>
<dbReference type="PAN-GO" id="O94826">
    <property type="GO annotations" value="5 GO annotations based on evolutionary models"/>
</dbReference>
<dbReference type="PhylomeDB" id="O94826"/>
<dbReference type="TreeFam" id="TF106203"/>
<dbReference type="PathwayCommons" id="O94826"/>
<dbReference type="Reactome" id="R-HSA-1268020">
    <property type="pathway name" value="Mitochondrial protein import"/>
</dbReference>
<dbReference type="Reactome" id="R-HSA-168928">
    <property type="pathway name" value="DDX58/IFIH1-mediated induction of interferon-alpha/beta"/>
</dbReference>
<dbReference type="Reactome" id="R-HSA-5205685">
    <property type="pathway name" value="PINK1-PRKN Mediated Mitophagy"/>
</dbReference>
<dbReference type="Reactome" id="R-HSA-5689880">
    <property type="pathway name" value="Ub-specific processing proteases"/>
</dbReference>
<dbReference type="Reactome" id="R-HSA-9692916">
    <property type="pathway name" value="SARS-CoV-1 activates/modulates innate immune responses"/>
</dbReference>
<dbReference type="Reactome" id="R-HSA-9705671">
    <property type="pathway name" value="SARS-CoV-2 activates/modulates innate and adaptive immune responses"/>
</dbReference>
<dbReference type="SignaLink" id="O94826"/>
<dbReference type="SIGNOR" id="O94826"/>
<dbReference type="BioGRID-ORCS" id="9868">
    <property type="hits" value="180 hits in 1161 CRISPR screens"/>
</dbReference>
<dbReference type="CD-CODE" id="FB4E32DD">
    <property type="entry name" value="Presynaptic clusters and postsynaptic densities"/>
</dbReference>
<dbReference type="ChiTaRS" id="TOMM70">
    <property type="organism name" value="human"/>
</dbReference>
<dbReference type="GeneWiki" id="TOMM70A"/>
<dbReference type="GenomeRNAi" id="9868"/>
<dbReference type="Pharos" id="O94826">
    <property type="development level" value="Tbio"/>
</dbReference>
<dbReference type="PRO" id="PR:O94826"/>
<dbReference type="Proteomes" id="UP000005640">
    <property type="component" value="Chromosome 3"/>
</dbReference>
<dbReference type="RNAct" id="O94826">
    <property type="molecule type" value="protein"/>
</dbReference>
<dbReference type="Bgee" id="ENSG00000154174">
    <property type="expression patterns" value="Expressed in endothelial cell and 214 other cell types or tissues"/>
</dbReference>
<dbReference type="GO" id="GO:0070062">
    <property type="term" value="C:extracellular exosome"/>
    <property type="evidence" value="ECO:0007005"/>
    <property type="project" value="UniProtKB"/>
</dbReference>
<dbReference type="GO" id="GO:0016020">
    <property type="term" value="C:membrane"/>
    <property type="evidence" value="ECO:0007005"/>
    <property type="project" value="UniProtKB"/>
</dbReference>
<dbReference type="GO" id="GO:0031966">
    <property type="term" value="C:mitochondrial membrane"/>
    <property type="evidence" value="ECO:0000314"/>
    <property type="project" value="UniProt"/>
</dbReference>
<dbReference type="GO" id="GO:0005741">
    <property type="term" value="C:mitochondrial outer membrane"/>
    <property type="evidence" value="ECO:0000318"/>
    <property type="project" value="GO_Central"/>
</dbReference>
<dbReference type="GO" id="GO:0005742">
    <property type="term" value="C:mitochondrial outer membrane translocase complex"/>
    <property type="evidence" value="ECO:0000250"/>
    <property type="project" value="FlyBase"/>
</dbReference>
<dbReference type="GO" id="GO:0005739">
    <property type="term" value="C:mitochondrion"/>
    <property type="evidence" value="ECO:0000314"/>
    <property type="project" value="UniProtKB"/>
</dbReference>
<dbReference type="GO" id="GO:0140596">
    <property type="term" value="C:TOM complex"/>
    <property type="evidence" value="ECO:0000303"/>
    <property type="project" value="ComplexPortal"/>
</dbReference>
<dbReference type="GO" id="GO:0030943">
    <property type="term" value="F:mitochondrion targeting sequence binding"/>
    <property type="evidence" value="ECO:0000250"/>
    <property type="project" value="FlyBase"/>
</dbReference>
<dbReference type="GO" id="GO:0060090">
    <property type="term" value="F:molecular adaptor activity"/>
    <property type="evidence" value="ECO:0000314"/>
    <property type="project" value="UniProt"/>
</dbReference>
<dbReference type="GO" id="GO:0008320">
    <property type="term" value="F:protein transmembrane transporter activity"/>
    <property type="evidence" value="ECO:0000304"/>
    <property type="project" value="BHF-UCL"/>
</dbReference>
<dbReference type="GO" id="GO:0002218">
    <property type="term" value="P:activation of innate immune response"/>
    <property type="evidence" value="ECO:0000314"/>
    <property type="project" value="UniProtKB"/>
</dbReference>
<dbReference type="GO" id="GO:0098586">
    <property type="term" value="P:cellular response to virus"/>
    <property type="evidence" value="ECO:0000314"/>
    <property type="project" value="UniProtKB"/>
</dbReference>
<dbReference type="GO" id="GO:0061052">
    <property type="term" value="P:negative regulation of cell growth involved in cardiac muscle cell development"/>
    <property type="evidence" value="ECO:0007669"/>
    <property type="project" value="Ensembl"/>
</dbReference>
<dbReference type="GO" id="GO:0002230">
    <property type="term" value="P:positive regulation of defense response to virus by host"/>
    <property type="evidence" value="ECO:0000314"/>
    <property type="project" value="UniProtKB"/>
</dbReference>
<dbReference type="GO" id="GO:0032728">
    <property type="term" value="P:positive regulation of interferon-beta production"/>
    <property type="evidence" value="ECO:0000314"/>
    <property type="project" value="UniProtKB"/>
</dbReference>
<dbReference type="GO" id="GO:1903955">
    <property type="term" value="P:positive regulation of protein targeting to mitochondrion"/>
    <property type="evidence" value="ECO:0007669"/>
    <property type="project" value="Ensembl"/>
</dbReference>
<dbReference type="GO" id="GO:0030150">
    <property type="term" value="P:protein import into mitochondrial matrix"/>
    <property type="evidence" value="ECO:0000250"/>
    <property type="project" value="FlyBase"/>
</dbReference>
<dbReference type="GO" id="GO:0045039">
    <property type="term" value="P:protein insertion into mitochondrial inner membrane"/>
    <property type="evidence" value="ECO:0000250"/>
    <property type="project" value="FlyBase"/>
</dbReference>
<dbReference type="GO" id="GO:0045040">
    <property type="term" value="P:protein insertion into mitochondrial outer membrane"/>
    <property type="evidence" value="ECO:0000303"/>
    <property type="project" value="ComplexPortal"/>
</dbReference>
<dbReference type="GO" id="GO:0006626">
    <property type="term" value="P:protein targeting to mitochondrion"/>
    <property type="evidence" value="ECO:0000250"/>
    <property type="project" value="FlyBase"/>
</dbReference>
<dbReference type="GO" id="GO:0042981">
    <property type="term" value="P:regulation of apoptotic process"/>
    <property type="evidence" value="ECO:0000314"/>
    <property type="project" value="UniProtKB"/>
</dbReference>
<dbReference type="GO" id="GO:0097068">
    <property type="term" value="P:response to thyroxine"/>
    <property type="evidence" value="ECO:0007669"/>
    <property type="project" value="Ensembl"/>
</dbReference>
<dbReference type="FunFam" id="1.25.40.10:FF:000141">
    <property type="entry name" value="Mitochondrial import receptor subunit TOM70"/>
    <property type="match status" value="1"/>
</dbReference>
<dbReference type="FunFam" id="1.25.40.10:FF:000071">
    <property type="entry name" value="Putative mitochondrial import receptor subunit TOM70"/>
    <property type="match status" value="1"/>
</dbReference>
<dbReference type="Gene3D" id="1.25.40.10">
    <property type="entry name" value="Tetratricopeptide repeat domain"/>
    <property type="match status" value="2"/>
</dbReference>
<dbReference type="InterPro" id="IPR011990">
    <property type="entry name" value="TPR-like_helical_dom_sf"/>
</dbReference>
<dbReference type="InterPro" id="IPR019734">
    <property type="entry name" value="TPR_rpt"/>
</dbReference>
<dbReference type="PANTHER" id="PTHR46208">
    <property type="entry name" value="MITOCHONDRIAL IMPORT RECEPTOR SUBUNIT TOM70"/>
    <property type="match status" value="1"/>
</dbReference>
<dbReference type="PANTHER" id="PTHR46208:SF1">
    <property type="entry name" value="MITOCHONDRIAL IMPORT RECEPTOR SUBUNIT TOM70"/>
    <property type="match status" value="1"/>
</dbReference>
<dbReference type="Pfam" id="PF00515">
    <property type="entry name" value="TPR_1"/>
    <property type="match status" value="1"/>
</dbReference>
<dbReference type="Pfam" id="PF13181">
    <property type="entry name" value="TPR_8"/>
    <property type="match status" value="4"/>
</dbReference>
<dbReference type="SMART" id="SM00028">
    <property type="entry name" value="TPR"/>
    <property type="match status" value="10"/>
</dbReference>
<dbReference type="SUPFAM" id="SSF48452">
    <property type="entry name" value="TPR-like"/>
    <property type="match status" value="2"/>
</dbReference>
<dbReference type="PROSITE" id="PS50005">
    <property type="entry name" value="TPR"/>
    <property type="match status" value="7"/>
</dbReference>
<dbReference type="PROSITE" id="PS50293">
    <property type="entry name" value="TPR_REGION"/>
    <property type="match status" value="1"/>
</dbReference>
<reference key="1">
    <citation type="journal article" date="1998" name="DNA Res.">
        <title>Prediction of the coding sequences of unidentified human genes. XI. The complete sequences of 100 new cDNA clones from brain which code for large proteins in vitro.</title>
        <authorList>
            <person name="Nagase T."/>
            <person name="Ishikawa K."/>
            <person name="Suyama M."/>
            <person name="Kikuno R."/>
            <person name="Miyajima N."/>
            <person name="Tanaka A."/>
            <person name="Kotani H."/>
            <person name="Nomura N."/>
            <person name="Ohara O."/>
        </authorList>
    </citation>
    <scope>NUCLEOTIDE SEQUENCE [LARGE SCALE MRNA]</scope>
    <source>
        <tissue>Brain</tissue>
    </source>
</reference>
<reference key="2">
    <citation type="submission" date="2005-09" db="EMBL/GenBank/DDBJ databases">
        <authorList>
            <person name="Mural R.J."/>
            <person name="Istrail S."/>
            <person name="Sutton G.G."/>
            <person name="Florea L."/>
            <person name="Halpern A.L."/>
            <person name="Mobarry C.M."/>
            <person name="Lippert R."/>
            <person name="Walenz B."/>
            <person name="Shatkay H."/>
            <person name="Dew I."/>
            <person name="Miller J.R."/>
            <person name="Flanigan M.J."/>
            <person name="Edwards N.J."/>
            <person name="Bolanos R."/>
            <person name="Fasulo D."/>
            <person name="Halldorsson B.V."/>
            <person name="Hannenhalli S."/>
            <person name="Turner R."/>
            <person name="Yooseph S."/>
            <person name="Lu F."/>
            <person name="Nusskern D.R."/>
            <person name="Shue B.C."/>
            <person name="Zheng X.H."/>
            <person name="Zhong F."/>
            <person name="Delcher A.L."/>
            <person name="Huson D.H."/>
            <person name="Kravitz S.A."/>
            <person name="Mouchard L."/>
            <person name="Reinert K."/>
            <person name="Remington K.A."/>
            <person name="Clark A.G."/>
            <person name="Waterman M.S."/>
            <person name="Eichler E.E."/>
            <person name="Adams M.D."/>
            <person name="Hunkapiller M.W."/>
            <person name="Myers E.W."/>
            <person name="Venter J.C."/>
        </authorList>
    </citation>
    <scope>NUCLEOTIDE SEQUENCE [LARGE SCALE GENOMIC DNA]</scope>
</reference>
<reference key="3">
    <citation type="journal article" date="2004" name="Genome Res.">
        <title>The status, quality, and expansion of the NIH full-length cDNA project: the Mammalian Gene Collection (MGC).</title>
        <authorList>
            <consortium name="The MGC Project Team"/>
        </authorList>
    </citation>
    <scope>NUCLEOTIDE SEQUENCE [LARGE SCALE MRNA]</scope>
    <source>
        <tissue>Skin</tissue>
        <tissue>Uterus</tissue>
    </source>
</reference>
<reference key="4">
    <citation type="journal article" date="2003" name="Cell">
        <title>Molecular chaperones Hsp90 and Hsp70 deliver preproteins to the mitochondrial import receptor Tom70.</title>
        <authorList>
            <person name="Young J.C."/>
            <person name="Hoogenraad N.J."/>
            <person name="Hartl F.U."/>
        </authorList>
    </citation>
    <scope>FUNCTION</scope>
    <scope>INTERACTION WITH HSP90AA1 AND HSPA8</scope>
    <scope>MUTAGENESIS OF ARG-192</scope>
    <scope>ACTIVITY REGULATION</scope>
</reference>
<reference key="5">
    <citation type="journal article" date="2006" name="Cell">
        <title>Global, in vivo, and site-specific phosphorylation dynamics in signaling networks.</title>
        <authorList>
            <person name="Olsen J.V."/>
            <person name="Blagoev B."/>
            <person name="Gnad F."/>
            <person name="Macek B."/>
            <person name="Kumar C."/>
            <person name="Mortensen P."/>
            <person name="Mann M."/>
        </authorList>
    </citation>
    <scope>IDENTIFICATION BY MASS SPECTROMETRY [LARGE SCALE ANALYSIS]</scope>
    <source>
        <tissue>Cervix carcinoma</tissue>
    </source>
</reference>
<reference key="6">
    <citation type="journal article" date="2008" name="Biochem. Biophys. Res. Commun.">
        <title>Identification of Tom5 and Tom6 in the preprotein translocase complex of human mitochondrial outer membrane.</title>
        <authorList>
            <person name="Kato H."/>
            <person name="Mihara K."/>
        </authorList>
    </citation>
    <scope>IDENTIFICATION IN THE TOM COMPLEX</scope>
</reference>
<reference key="7">
    <citation type="journal article" date="2008" name="J. Proteome Res.">
        <title>Phosphoproteome of resting human platelets.</title>
        <authorList>
            <person name="Zahedi R.P."/>
            <person name="Lewandrowski U."/>
            <person name="Wiesner J."/>
            <person name="Wortelkamp S."/>
            <person name="Moebius J."/>
            <person name="Schuetz C."/>
            <person name="Walter U."/>
            <person name="Gambaryan S."/>
            <person name="Sickmann A."/>
        </authorList>
    </citation>
    <scope>PHOSPHORYLATION [LARGE SCALE ANALYSIS] AT SER-91</scope>
    <scope>IDENTIFICATION BY MASS SPECTROMETRY [LARGE SCALE ANALYSIS]</scope>
    <source>
        <tissue>Platelet</tissue>
    </source>
</reference>
<reference key="8">
    <citation type="journal article" date="2008" name="Proc. Natl. Acad. Sci. U.S.A.">
        <title>A quantitative atlas of mitotic phosphorylation.</title>
        <authorList>
            <person name="Dephoure N."/>
            <person name="Zhou C."/>
            <person name="Villen J."/>
            <person name="Beausoleil S.A."/>
            <person name="Bakalarski C.E."/>
            <person name="Elledge S.J."/>
            <person name="Gygi S.P."/>
        </authorList>
    </citation>
    <scope>PHOSPHORYLATION [LARGE SCALE ANALYSIS] AT SER-91</scope>
    <scope>IDENTIFICATION BY MASS SPECTROMETRY [LARGE SCALE ANALYSIS]</scope>
    <source>
        <tissue>Cervix carcinoma</tissue>
    </source>
</reference>
<reference key="9">
    <citation type="journal article" date="2009" name="Anal. Chem.">
        <title>Lys-N and trypsin cover complementary parts of the phosphoproteome in a refined SCX-based approach.</title>
        <authorList>
            <person name="Gauci S."/>
            <person name="Helbig A.O."/>
            <person name="Slijper M."/>
            <person name="Krijgsveld J."/>
            <person name="Heck A.J."/>
            <person name="Mohammed S."/>
        </authorList>
    </citation>
    <scope>ACETYLATION [LARGE SCALE ANALYSIS] AT ALA-2</scope>
    <scope>CLEAVAGE OF INITIATOR METHIONINE [LARGE SCALE ANALYSIS]</scope>
    <scope>IDENTIFICATION BY MASS SPECTROMETRY [LARGE SCALE ANALYSIS]</scope>
</reference>
<reference key="10">
    <citation type="journal article" date="2009" name="Science">
        <title>Lysine acetylation targets protein complexes and co-regulates major cellular functions.</title>
        <authorList>
            <person name="Choudhary C."/>
            <person name="Kumar C."/>
            <person name="Gnad F."/>
            <person name="Nielsen M.L."/>
            <person name="Rehman M."/>
            <person name="Walther T.C."/>
            <person name="Olsen J.V."/>
            <person name="Mann M."/>
        </authorList>
    </citation>
    <scope>ACETYLATION [LARGE SCALE ANALYSIS] AT LYS-185</scope>
    <scope>IDENTIFICATION BY MASS SPECTROMETRY [LARGE SCALE ANALYSIS]</scope>
</reference>
<reference key="11">
    <citation type="journal article" date="2010" name="Cell Res.">
        <title>Tom70 mediates activation of interferon regulatory factor 3 on mitochondria.</title>
        <authorList>
            <person name="Liu X.Y."/>
            <person name="Wei B."/>
            <person name="Shi H.X."/>
            <person name="Shan Y.F."/>
            <person name="Wang C."/>
        </authorList>
    </citation>
    <scope>FUNCTION</scope>
    <scope>INTERACTION WITH TRADD; TRAF6; STING; HSP90AA1 AND MAVS</scope>
    <scope>SUBCELLULAR LOCATION</scope>
    <scope>MUTAGENESIS OF ARG-192</scope>
</reference>
<reference key="12">
    <citation type="journal article" date="2010" name="Sci. Signal.">
        <title>Quantitative phosphoproteomics reveals widespread full phosphorylation site occupancy during mitosis.</title>
        <authorList>
            <person name="Olsen J.V."/>
            <person name="Vermeulen M."/>
            <person name="Santamaria A."/>
            <person name="Kumar C."/>
            <person name="Miller M.L."/>
            <person name="Jensen L.J."/>
            <person name="Gnad F."/>
            <person name="Cox J."/>
            <person name="Jensen T.S."/>
            <person name="Nigg E.A."/>
            <person name="Brunak S."/>
            <person name="Mann M."/>
        </authorList>
    </citation>
    <scope>PHOSPHORYLATION [LARGE SCALE ANALYSIS] AT SER-91</scope>
    <scope>IDENTIFICATION BY MASS SPECTROMETRY [LARGE SCALE ANALYSIS]</scope>
    <source>
        <tissue>Cervix carcinoma</tissue>
    </source>
</reference>
<reference key="13">
    <citation type="journal article" date="2011" name="BMC Syst. Biol.">
        <title>Initial characterization of the human central proteome.</title>
        <authorList>
            <person name="Burkard T.R."/>
            <person name="Planyavsky M."/>
            <person name="Kaupe I."/>
            <person name="Breitwieser F.P."/>
            <person name="Buerckstuemmer T."/>
            <person name="Bennett K.L."/>
            <person name="Superti-Furga G."/>
            <person name="Colinge J."/>
        </authorList>
    </citation>
    <scope>IDENTIFICATION BY MASS SPECTROMETRY [LARGE SCALE ANALYSIS]</scope>
</reference>
<reference key="14">
    <citation type="journal article" date="2011" name="Sci. Signal.">
        <title>System-wide temporal characterization of the proteome and phosphoproteome of human embryonic stem cell differentiation.</title>
        <authorList>
            <person name="Rigbolt K.T."/>
            <person name="Prokhorova T.A."/>
            <person name="Akimov V."/>
            <person name="Henningsen J."/>
            <person name="Johansen P.T."/>
            <person name="Kratchmarova I."/>
            <person name="Kassem M."/>
            <person name="Mann M."/>
            <person name="Olsen J.V."/>
            <person name="Blagoev B."/>
        </authorList>
    </citation>
    <scope>PHOSPHORYLATION [LARGE SCALE ANALYSIS] AT SER-91</scope>
    <scope>IDENTIFICATION BY MASS SPECTROMETRY [LARGE SCALE ANALYSIS]</scope>
</reference>
<reference key="15">
    <citation type="journal article" date="2012" name="Mol. Cell. Proteomics">
        <title>Comparative large-scale characterisation of plant vs. mammal proteins reveals similar and idiosyncratic N-alpha acetylation features.</title>
        <authorList>
            <person name="Bienvenut W.V."/>
            <person name="Sumpton D."/>
            <person name="Martinez A."/>
            <person name="Lilla S."/>
            <person name="Espagne C."/>
            <person name="Meinnel T."/>
            <person name="Giglione C."/>
        </authorList>
    </citation>
    <scope>ACETYLATION [LARGE SCALE ANALYSIS] AT ALA-2</scope>
    <scope>CLEAVAGE OF INITIATOR METHIONINE [LARGE SCALE ANALYSIS]</scope>
    <scope>IDENTIFICATION BY MASS SPECTROMETRY [LARGE SCALE ANALYSIS]</scope>
</reference>
<reference key="16">
    <citation type="journal article" date="2012" name="Proc. Natl. Acad. Sci. U.S.A.">
        <title>N-terminal acetylome analyses and functional insights of the N-terminal acetyltransferase NatB.</title>
        <authorList>
            <person name="Van Damme P."/>
            <person name="Lasa M."/>
            <person name="Polevoda B."/>
            <person name="Gazquez C."/>
            <person name="Elosegui-Artola A."/>
            <person name="Kim D.S."/>
            <person name="De Juan-Pardo E."/>
            <person name="Demeyer K."/>
            <person name="Hole K."/>
            <person name="Larrea E."/>
            <person name="Timmerman E."/>
            <person name="Prieto J."/>
            <person name="Arnesen T."/>
            <person name="Sherman F."/>
            <person name="Gevaert K."/>
            <person name="Aldabe R."/>
        </authorList>
    </citation>
    <scope>ACETYLATION [LARGE SCALE ANALYSIS] AT ALA-2</scope>
    <scope>CLEAVAGE OF INITIATOR METHIONINE [LARGE SCALE ANALYSIS]</scope>
    <scope>IDENTIFICATION BY MASS SPECTROMETRY [LARGE SCALE ANALYSIS]</scope>
</reference>
<reference key="17">
    <citation type="journal article" date="2013" name="J. Proteome Res.">
        <title>Toward a comprehensive characterization of a human cancer cell phosphoproteome.</title>
        <authorList>
            <person name="Zhou H."/>
            <person name="Di Palma S."/>
            <person name="Preisinger C."/>
            <person name="Peng M."/>
            <person name="Polat A.N."/>
            <person name="Heck A.J."/>
            <person name="Mohammed S."/>
        </authorList>
    </citation>
    <scope>PHOSPHORYLATION [LARGE SCALE ANALYSIS] AT SER-91; SER-110 AND SER-434</scope>
    <scope>IDENTIFICATION BY MASS SPECTROMETRY [LARGE SCALE ANALYSIS]</scope>
    <source>
        <tissue>Cervix carcinoma</tissue>
        <tissue>Erythroleukemia</tissue>
    </source>
</reference>
<reference key="18">
    <citation type="journal article" date="2014" name="J. Proteomics">
        <title>An enzyme assisted RP-RPLC approach for in-depth analysis of human liver phosphoproteome.</title>
        <authorList>
            <person name="Bian Y."/>
            <person name="Song C."/>
            <person name="Cheng K."/>
            <person name="Dong M."/>
            <person name="Wang F."/>
            <person name="Huang J."/>
            <person name="Sun D."/>
            <person name="Wang L."/>
            <person name="Ye M."/>
            <person name="Zou H."/>
        </authorList>
    </citation>
    <scope>PHOSPHORYLATION [LARGE SCALE ANALYSIS] AT SER-91 AND SER-96</scope>
    <scope>IDENTIFICATION BY MASS SPECTROMETRY [LARGE SCALE ANALYSIS]</scope>
    <source>
        <tissue>Liver</tissue>
    </source>
</reference>
<reference key="19">
    <citation type="journal article" date="2014" name="Mol. Cell. Proteomics">
        <title>Immunoaffinity enrichment and mass spectrometry analysis of protein methylation.</title>
        <authorList>
            <person name="Guo A."/>
            <person name="Gu H."/>
            <person name="Zhou J."/>
            <person name="Mulhern D."/>
            <person name="Wang Y."/>
            <person name="Lee K.A."/>
            <person name="Yang V."/>
            <person name="Aguiar M."/>
            <person name="Kornhauser J."/>
            <person name="Jia X."/>
            <person name="Ren J."/>
            <person name="Beausoleil S.A."/>
            <person name="Silva J.C."/>
            <person name="Vemulapalli V."/>
            <person name="Bedford M.T."/>
            <person name="Comb M.J."/>
        </authorList>
    </citation>
    <scope>METHYLATION [LARGE SCALE ANALYSIS] AT ARG-71</scope>
    <scope>IDENTIFICATION BY MASS SPECTROMETRY [LARGE SCALE ANALYSIS]</scope>
    <source>
        <tissue>Colon carcinoma</tissue>
    </source>
</reference>
<reference key="20">
    <citation type="journal article" date="2015" name="J. Virol.">
        <title>Tom70 mediates Sendai virus-induced apoptosis on mitochondria.</title>
        <authorList>
            <person name="Wei B."/>
            <person name="Cui Y."/>
            <person name="Huang Y."/>
            <person name="Liu H."/>
            <person name="Li L."/>
            <person name="Li M."/>
            <person name="Ruan K.C."/>
            <person name="Zhou Q."/>
            <person name="Wang C."/>
        </authorList>
    </citation>
    <scope>FUNCTION</scope>
    <scope>INTERACTION WITH HSP90AA1</scope>
    <scope>SUBCELLULAR LOCATION</scope>
    <scope>MUTAGENESIS OF ARG-192 AND LYS-195</scope>
</reference>
<reference key="21">
    <citation type="journal article" date="2015" name="Proteomics">
        <title>N-terminome analysis of the human mitochondrial proteome.</title>
        <authorList>
            <person name="Vaca Jacome A.S."/>
            <person name="Rabilloud T."/>
            <person name="Schaeffer-Reiss C."/>
            <person name="Rompais M."/>
            <person name="Ayoub D."/>
            <person name="Lane L."/>
            <person name="Bairoch A."/>
            <person name="Van Dorsselaer A."/>
            <person name="Carapito C."/>
        </authorList>
    </citation>
    <scope>ACETYLATION [LARGE SCALE ANALYSIS] AT ALA-2</scope>
    <scope>CLEAVAGE OF INITIATOR METHIONINE [LARGE SCALE ANALYSIS]</scope>
    <scope>IDENTIFICATION BY MASS SPECTROMETRY [LARGE SCALE ANALYSIS]</scope>
</reference>
<reference key="22">
    <citation type="journal article" date="2017" name="Nat. Struct. Mol. Biol.">
        <title>Site-specific mapping of the human SUMO proteome reveals co-modification with phosphorylation.</title>
        <authorList>
            <person name="Hendriks I.A."/>
            <person name="Lyon D."/>
            <person name="Young C."/>
            <person name="Jensen L.J."/>
            <person name="Vertegaal A.C."/>
            <person name="Nielsen M.L."/>
        </authorList>
    </citation>
    <scope>SUMOYLATION [LARGE SCALE ANALYSIS] AT LYS-275</scope>
    <scope>IDENTIFICATION BY MASS SPECTROMETRY [LARGE SCALE ANALYSIS]</scope>
</reference>
<reference key="23">
    <citation type="journal article" date="2020" name="Cell. Mol. Immunol.">
        <title>SARS-CoV-2 Orf9b suppresses type I interferon responses by targeting TOM70.</title>
        <authorList>
            <person name="Jiang H.W."/>
            <person name="Zhang H.N."/>
            <person name="Meng Q.F."/>
            <person name="Xie J."/>
            <person name="Li Y."/>
            <person name="Chen H."/>
            <person name="Zheng Y.X."/>
            <person name="Wang X.N."/>
            <person name="Qi H."/>
            <person name="Zhang J."/>
            <person name="Wang P.H."/>
            <person name="Han Z.G."/>
            <person name="Tao S.C."/>
        </authorList>
    </citation>
    <scope>INTERACTION WITH SARS-COV VIRUS AND SARS-COV-2 VIRUS PROTEIN ORF9B (MICROBIAL INFECTION)</scope>
    <scope>FUNCTION</scope>
</reference>
<reference key="24">
    <citation type="journal article" date="2021" name="Proc. Natl. Acad. Sci. U.S.A.">
        <title>Toxoplasma gondii association with host mitochondria requires key mitochondrial protein import machinery.</title>
        <authorList>
            <person name="Blank M.L."/>
            <person name="Xia J."/>
            <person name="Morcos M.M."/>
            <person name="Sun M."/>
            <person name="Cantrell P.S."/>
            <person name="Liu Y."/>
            <person name="Zeng X."/>
            <person name="Powell C.J."/>
            <person name="Yates N."/>
            <person name="Boulanger M.J."/>
            <person name="Boyle J.P."/>
        </authorList>
    </citation>
    <scope>INTERACTION WITH T.GONDII MAF1B1 (MICROBIAL INFECTION)</scope>
    <scope>SUBCELLULAR LOCATION</scope>
    <scope>IDENTIFICATION BY MASS SPECTROMETRY</scope>
</reference>
<reference evidence="15" key="25">
    <citation type="journal article" date="2022" name="Science">
        <title>Mitochondria shed their outer membrane in response to infection-induced stress.</title>
        <authorList>
            <person name="Li X."/>
            <person name="Straub J."/>
            <person name="Medeiros T.C."/>
            <person name="Mehra C."/>
            <person name="den Brave F."/>
            <person name="Peker E."/>
            <person name="Atanassov I."/>
            <person name="Stillger K."/>
            <person name="Michaelis J.B."/>
            <person name="Burbridge E."/>
            <person name="Adrain C."/>
            <person name="Muench C."/>
            <person name="Riemer J."/>
            <person name="Becker T."/>
            <person name="Pernas L.F."/>
        </authorList>
    </citation>
    <scope>FUNCTION</scope>
    <scope>INTERACTION WITH T.GONDII MAF1B1 (MICROBIAL INFECTION)</scope>
</reference>
<reference key="26">
    <citation type="journal article" date="2022" name="J. Mol. Med.">
        <title>The role of the individual TOM subunits in the association of PINK1 with depolarized mitochondria.</title>
        <authorList>
            <person name="Maruszczak K.K."/>
            <person name="Jung M."/>
            <person name="Rasool S."/>
            <person name="Trempe J.F."/>
            <person name="Rapaport D."/>
        </authorList>
    </citation>
    <scope>INTERACTION WITH PINK1</scope>
</reference>
<reference key="27">
    <citation type="journal article" date="2024" name="Proc. Natl. Acad. Sci. U.S.A.">
        <title>Tom20 gates PINK1 activity and mediates its tethering of the TOM and TIM23 translocases upon mitochondrial stress.</title>
        <authorList>
            <person name="Eldeeb M.A."/>
            <person name="Bayne A.N."/>
            <person name="Fallahi A."/>
            <person name="Goiran T."/>
            <person name="MacDougall E.J."/>
            <person name="Soumbasis A."/>
            <person name="Zorca C.E."/>
            <person name="Tabah J.J."/>
            <person name="Thomas R.A."/>
            <person name="Karpilovsky N."/>
            <person name="Mathur M."/>
            <person name="Durcan T.M."/>
            <person name="Trempe J.F."/>
            <person name="Fon E.A."/>
        </authorList>
    </citation>
    <scope>SUBUNIT</scope>
</reference>
<reference key="28">
    <citation type="journal article" date="2024" name="Sci. Adv.">
        <title>Mechanism of human PINK1 activation at the TOM complex in a reconstituted system.</title>
        <authorList>
            <person name="Raimi O.G."/>
            <person name="Ojha H."/>
            <person name="Ehses K."/>
            <person name="Dederer V."/>
            <person name="Lange S.M."/>
            <person name="Rivera C.P."/>
            <person name="Deegan T.D."/>
            <person name="Chen Y."/>
            <person name="Wightman M."/>
            <person name="Toth R."/>
            <person name="Labib K.P.M."/>
            <person name="Mathea S."/>
            <person name="Ranson N."/>
            <person name="Fernandez-Busnadiego R."/>
            <person name="Muqit M.M.K."/>
        </authorList>
    </citation>
    <scope>SUBUNIT</scope>
</reference>
<reference evidence="17" key="29">
    <citation type="journal article" date="2020" name="Science">
        <title>Comparative host-coronavirus protein interaction networks reveal pan-viral disease mechanisms.</title>
        <authorList>
            <consortium name="QCRG Structural Biology Consortium"/>
            <consortium name="Zoonomia Consortium"/>
            <person name="Gordon D.E."/>
            <person name="Hiatt J."/>
            <person name="Bouhaddou M."/>
            <person name="Rezelj V.V."/>
            <person name="Ulferts S."/>
            <person name="Braberg H."/>
            <person name="Jureka A.S."/>
            <person name="Obernier K."/>
            <person name="Guo J.Z."/>
            <person name="Batra J."/>
            <person name="Kaake R.M."/>
            <person name="Weckstein A.R."/>
            <person name="Owens T.W."/>
            <person name="Gupta M."/>
            <person name="Pourmal S."/>
            <person name="Titus E.W."/>
            <person name="Cakir M."/>
            <person name="Soucheray M."/>
            <person name="McGregor M."/>
            <person name="Cakir Z."/>
            <person name="Jang G."/>
            <person name="O'Meara M.J."/>
            <person name="Tummino T.A."/>
            <person name="Zhang Z."/>
            <person name="Foussard H."/>
            <person name="Rojc A."/>
            <person name="Zhou Y."/>
            <person name="Kuchenov D."/>
            <person name="Huettenhain R."/>
            <person name="Xu J."/>
            <person name="Eckhardt M."/>
            <person name="Swaney D.L."/>
            <person name="Fabius J.M."/>
            <person name="Ummadi M."/>
            <person name="Tutuncuoglu B."/>
            <person name="Rathore U."/>
            <person name="Modak M."/>
            <person name="Haas P."/>
            <person name="Haas K.M."/>
            <person name="Naing Z.Z.C."/>
            <person name="Pulido E.H."/>
            <person name="Shi Y."/>
            <person name="Barrio-Hernandez I."/>
            <person name="Memon D."/>
            <person name="Petsalaki E."/>
            <person name="Dunham A."/>
            <person name="Marrero M.C."/>
            <person name="Burke D."/>
            <person name="Koh C."/>
            <person name="Vallet T."/>
            <person name="Silvas J.A."/>
            <person name="Azumaya C.M."/>
            <person name="Billesboelle C."/>
            <person name="Brilot A.F."/>
            <person name="Campbell M.G."/>
            <person name="Diallo A."/>
            <person name="Dickinson M.S."/>
            <person name="Diwanji D."/>
            <person name="Herrera N."/>
            <person name="Hoppe N."/>
            <person name="Kratochvil H.T."/>
            <person name="Liu Y."/>
            <person name="Merz G.E."/>
            <person name="Moritz M."/>
            <person name="Nguyen H.C."/>
            <person name="Nowotny C."/>
            <person name="Puchades C."/>
            <person name="Rizo A.N."/>
            <person name="Schulze-Gahmen U."/>
            <person name="Smith A.M."/>
            <person name="Sun M."/>
            <person name="Young I.D."/>
            <person name="Zhao J."/>
            <person name="Asarnow D."/>
            <person name="Biel J."/>
            <person name="Bowen A."/>
            <person name="Braxton J.R."/>
            <person name="Chen J."/>
            <person name="Chio C.M."/>
            <person name="Chio U.S."/>
            <person name="Deshpande I."/>
            <person name="Doan L."/>
            <person name="Faust B."/>
            <person name="Flores S."/>
            <person name="Jin M."/>
            <person name="Kim K."/>
            <person name="Lam V.L."/>
            <person name="Li F."/>
            <person name="Li J."/>
            <person name="Li Y.L."/>
            <person name="Li Y."/>
            <person name="Liu X."/>
            <person name="Lo M."/>
            <person name="Lopez K.E."/>
            <person name="Melo A.A."/>
            <person name="Moss F.R. III"/>
            <person name="Nguyen P."/>
            <person name="Paulino J."/>
            <person name="Pawar K.I."/>
            <person name="Peters J.K."/>
            <person name="Pospiech T.H. Jr."/>
            <person name="Safari M."/>
            <person name="Sangwan S."/>
            <person name="Schaefer K."/>
            <person name="Thomas P.V."/>
            <person name="Thwin A.C."/>
            <person name="Trenker R."/>
            <person name="Tse E."/>
            <person name="Tsui T.K.M."/>
            <person name="Wang F."/>
            <person name="Whitis N."/>
            <person name="Yu Z."/>
            <person name="Zhang K."/>
            <person name="Zhang Y."/>
            <person name="Zhou F."/>
            <person name="Saltzberg D."/>
            <person name="Hodder A.J."/>
            <person name="Shun-Shion A.S."/>
            <person name="Williams D.M."/>
            <person name="White K.M."/>
            <person name="Rosales R."/>
            <person name="Kehrer T."/>
            <person name="Miorin L."/>
            <person name="Moreno E."/>
            <person name="Patel A.H."/>
            <person name="Rihn S."/>
            <person name="Khalid M.M."/>
            <person name="Vallejo-Gracia A."/>
            <person name="Fozouni P."/>
            <person name="Simoneau C.R."/>
            <person name="Roth T.L."/>
            <person name="Wu D."/>
            <person name="Karim M.A."/>
            <person name="Ghoussaini M."/>
            <person name="Dunham I."/>
            <person name="Berardi F."/>
            <person name="Weigang S."/>
            <person name="Chazal M."/>
            <person name="Park J."/>
            <person name="Logue J."/>
            <person name="McGrath M."/>
            <person name="Weston S."/>
            <person name="Haupt R."/>
            <person name="Hastie C.J."/>
            <person name="Elliott M."/>
            <person name="Brown F."/>
            <person name="Burness K.A."/>
            <person name="Reid E."/>
            <person name="Dorward M."/>
            <person name="Johnson C."/>
            <person name="Wilkinson S.G."/>
            <person name="Geyer A."/>
            <person name="Giesel D.M."/>
            <person name="Baillie C."/>
            <person name="Raggett S."/>
            <person name="Leech H."/>
            <person name="Toth R."/>
            <person name="Goodman N."/>
            <person name="Keough K.C."/>
            <person name="Lind A.L."/>
            <person name="Klesh R.J."/>
            <person name="Hemphill K.R."/>
            <person name="Carlson-Stevermer J."/>
            <person name="Oki J."/>
            <person name="Holden K."/>
            <person name="Maures T."/>
            <person name="Pollard K.S."/>
            <person name="Sali A."/>
            <person name="Agard D.A."/>
            <person name="Cheng Y."/>
            <person name="Fraser J.S."/>
            <person name="Frost A."/>
            <person name="Jura N."/>
            <person name="Kortemme T."/>
            <person name="Manglik A."/>
            <person name="Southworth D.R."/>
            <person name="Stroud R.M."/>
            <person name="Alessi D.R."/>
            <person name="Davies P."/>
            <person name="Frieman M.B."/>
            <person name="Ideker T."/>
            <person name="Abate C."/>
            <person name="Jouvenet N."/>
            <person name="Kochs G."/>
            <person name="Shoichet B."/>
            <person name="Ott M."/>
            <person name="Palmarini M."/>
            <person name="Shokat K.M."/>
            <person name="Garcia-Sastre A."/>
            <person name="Rassen J.A."/>
            <person name="Grosse R."/>
            <person name="Rosenberg O.S."/>
            <person name="Verba K.A."/>
            <person name="Basler C.F."/>
            <person name="Vignuzzi M."/>
            <person name="Peden A.A."/>
            <person name="Beltrao P."/>
            <person name="Krogan N.J."/>
        </authorList>
    </citation>
    <scope>STRUCTURE BY ELECTRON MICROSCOPY (3.05 ANGSTROMS) OF 109-608 IN COMPLEX WITH SARS-COV-2 VIRUS PROTEIN ORF9B</scope>
    <scope>FUNCTION</scope>
    <scope>SUBCELLULAR LOCATION</scope>
    <scope>INTERACTION WITH SARS-COV VIRUS AND SARS-COV-2 VIRUS PROTEIN ORF9B (MICROBIAL INFECTION)</scope>
</reference>
<comment type="function">
    <text evidence="4 6 7 8 11">Acts as a receptor of the preprotein translocase complex of the outer mitochondrial membrane (TOM complex) (PubMed:12526792). Recognizes and mediates the translocation of mitochondrial preproteins from the cytosol into the mitochondria in a chaperone dependent manner (PubMed:12526792, PubMed:35025629). Mediates TBK1 and IRF3 activation induced by MAVS in response to Sendai virus infection and promotes host antiviral responses during virus infection (PubMed:20628368, PubMed:25609812, PubMed:32728199). Upon Sendai virus infection, recruits HSP90AA1:IRF3:BAX in mitochondrion and the complex induces apoptosis (PubMed:25609812).</text>
</comment>
<comment type="subunit">
    <text evidence="1 4 5 6 7 12 13 14">Forms part of the preprotein translocase complex of the outer mitochondrial membrane (TOM complex) which consists of at least 7 different proteins (TOMM5, TOMM6, TOMM7, TOMM20, TOMM22, TOMM40 and TOMM70) (PubMed:18331822). Interacts with CAPN8 (By similarity). Interacts with TRADD, TRAF6 and STING (PubMed:20628368). Interacts with MAVS; the interaction is enhanced by Sendai virus infection (PubMed:20628368). Interacts with HSPA8 and HSP90AA1; both interactions are required for preprotein mitochondrial import (PubMed:12526792). The interaction with HSP90AA1 is direct and mediates the association of TOMM70 with IRF3 and TBK1 (PubMed:20628368, PubMed:25609812). Upon mitochondrial depolarization, interacts with PINK1; the interaction is required for PINK1-TOM-TIM23 supercomplex formation which is critical for PINK1 stabilization at the outer mitochondrial membrane, kinase activation and downstream mitophagy (PubMed:35391620, PubMed:38416681, PubMed:38848361).</text>
</comment>
<comment type="subunit">
    <text evidence="9">(Microbial infection) Interacts (via C-terminus) with SARS coronaviru/SARS-CoV and SARS coronavirus-2/SARS-CoV-2 virus protein ORF9b.</text>
</comment>
<comment type="subunit">
    <text evidence="10 11">(Microbial infection) Interacts with parasite T.gondii RH strain MAF1b1; the interaction impairs TOMM70 import activity, enables the parasite to associate with the host mitochondria and facilitates the association of MAF1b1 with MIB complex component SAMM50, promoting the formation of SPOTs (structures positive for outer mitochondrial membrane (OMM)); the interaction is probably indirect.</text>
</comment>
<comment type="interaction">
    <interactant intactId="EBI-2800236">
        <id>O94826</id>
    </interactant>
    <interactant intactId="EBI-296047">
        <id>P07900</id>
        <label>HSP90AA1</label>
    </interactant>
    <organismsDiffer>false</organismsDiffer>
    <experiments>4</experiments>
</comment>
<comment type="interaction">
    <interactant intactId="EBI-2800236">
        <id>O94826</id>
    </interactant>
    <interactant intactId="EBI-25475909">
        <id>P0DTD2</id>
        <label>9b</label>
    </interactant>
    <organismsDiffer>true</organismsDiffer>
    <experiments>28</experiments>
</comment>
<comment type="interaction">
    <interactant intactId="EBI-2800236">
        <id>O94826</id>
    </interactant>
    <interactant intactId="EBI-9021274">
        <id>P59636</id>
        <label>9b</label>
    </interactant>
    <organismsDiffer>true</organismsDiffer>
    <experiments>7</experiments>
</comment>
<comment type="subcellular location">
    <subcellularLocation>
        <location evidence="6 7 10">Mitochondrion outer membrane</location>
        <topology evidence="2">Single-pass membrane protein</topology>
    </subcellularLocation>
</comment>
<comment type="subcellular location">
    <text evidence="10">(Microbial infection) During parasite T.gondii-mediated infection, enriched at the interface between the host mitochondria and the parasitopharous vacuole.</text>
</comment>
<comment type="similarity">
    <text evidence="15">Belongs to the Tom70 family.</text>
</comment>
<comment type="sequence caution" evidence="15">
    <conflict type="erroneous initiation">
        <sequence resource="EMBL-CDS" id="BAA34439"/>
    </conflict>
    <text>Extended N-terminus.</text>
</comment>
<proteinExistence type="evidence at protein level"/>
<gene>
    <name evidence="16" type="primary">TOMM70</name>
    <name type="synonym">KIAA0719</name>
    <name type="synonym">TOM70</name>
    <name type="synonym">TOMM70A</name>
</gene>
<keyword id="KW-0002">3D-structure</keyword>
<keyword id="KW-0007">Acetylation</keyword>
<keyword id="KW-0945">Host-virus interaction</keyword>
<keyword id="KW-1017">Isopeptide bond</keyword>
<keyword id="KW-0472">Membrane</keyword>
<keyword id="KW-0488">Methylation</keyword>
<keyword id="KW-0496">Mitochondrion</keyword>
<keyword id="KW-1000">Mitochondrion outer membrane</keyword>
<keyword id="KW-0597">Phosphoprotein</keyword>
<keyword id="KW-1267">Proteomics identification</keyword>
<keyword id="KW-1185">Reference proteome</keyword>
<keyword id="KW-0677">Repeat</keyword>
<keyword id="KW-0802">TPR repeat</keyword>
<keyword id="KW-0812">Transmembrane</keyword>
<keyword id="KW-1133">Transmembrane helix</keyword>
<keyword id="KW-0832">Ubl conjugation</keyword>
<name>TOM70_HUMAN</name>